<accession>P07993</accession>
<proteinExistence type="inferred from homology"/>
<reference key="1">
    <citation type="journal article" date="1985" name="Virology">
        <title>Nucleotide sequence at the 3' terminus of pepper mottle virus genomic RNA: evidence for an alternative mode of potyvirus capsid protein gene organization.</title>
        <authorList>
            <person name="Dougherty W.G."/>
            <person name="Allison R.F."/>
            <person name="Parks T.D."/>
            <person name="Johnston R.E."/>
            <person name="Feild M.J."/>
            <person name="Armstrong F.B."/>
        </authorList>
    </citation>
    <scope>NUCLEOTIDE SEQUENCE [GENOMIC RNA]</scope>
</reference>
<reference key="2">
    <citation type="journal article" date="2001" name="Virus Res.">
        <title>Potyvirus proteins: a wealth of functions.</title>
        <authorList>
            <person name="Urcuqui-Inchima S."/>
            <person name="Haenni A.L."/>
            <person name="Bernardi F."/>
        </authorList>
    </citation>
    <scope>REVIEW</scope>
</reference>
<evidence type="ECO:0000250" key="1"/>
<evidence type="ECO:0000250" key="2">
    <source>
        <dbReference type="UniProtKB" id="P04517"/>
    </source>
</evidence>
<evidence type="ECO:0000255" key="3">
    <source>
        <dbReference type="PROSITE-ProRule" id="PRU00539"/>
    </source>
</evidence>
<evidence type="ECO:0000256" key="4">
    <source>
        <dbReference type="SAM" id="MobiDB-lite"/>
    </source>
</evidence>
<evidence type="ECO:0000305" key="5"/>
<keyword id="KW-0167">Capsid protein</keyword>
<keyword id="KW-0548">Nucleotidyltransferase</keyword>
<keyword id="KW-0696">RNA-directed RNA polymerase</keyword>
<keyword id="KW-0808">Transferase</keyword>
<keyword id="KW-0693">Viral RNA replication</keyword>
<keyword id="KW-0946">Virion</keyword>
<feature type="chain" id="PRO_0000227541" description="Nuclear inclusion protein B" evidence="1">
    <location>
        <begin position="1" status="less than"/>
        <end position="114"/>
    </location>
</feature>
<feature type="chain" id="PRO_0000420038" description="Genome polyprotein">
    <location>
        <begin position="1"/>
        <end position="381"/>
    </location>
</feature>
<feature type="chain" id="PRO_0000219918" description="Capsid protein" evidence="1">
    <location>
        <begin position="115"/>
        <end position="381"/>
    </location>
</feature>
<feature type="region of interest" description="Disordered" evidence="4">
    <location>
        <begin position="115"/>
        <end position="155"/>
    </location>
</feature>
<feature type="site" description="Cleavage; by NIa-pro" evidence="1">
    <location>
        <begin position="114"/>
        <end position="115"/>
    </location>
</feature>
<feature type="non-terminal residue">
    <location>
        <position position="1"/>
    </location>
</feature>
<dbReference type="EC" id="2.7.7.48"/>
<dbReference type="EMBL" id="M11598">
    <property type="protein sequence ID" value="AAA46902.1"/>
    <property type="status" value="ALT_FRAME"/>
    <property type="molecule type" value="Genomic_RNA"/>
</dbReference>
<dbReference type="PIR" id="A26205">
    <property type="entry name" value="A26205"/>
</dbReference>
<dbReference type="SMR" id="P07993"/>
<dbReference type="GO" id="GO:0019028">
    <property type="term" value="C:viral capsid"/>
    <property type="evidence" value="ECO:0007669"/>
    <property type="project" value="UniProtKB-KW"/>
</dbReference>
<dbReference type="GO" id="GO:0003968">
    <property type="term" value="F:RNA-directed RNA polymerase activity"/>
    <property type="evidence" value="ECO:0007669"/>
    <property type="project" value="UniProtKB-KW"/>
</dbReference>
<dbReference type="InterPro" id="IPR043502">
    <property type="entry name" value="DNA/RNA_pol_sf"/>
</dbReference>
<dbReference type="InterPro" id="IPR001592">
    <property type="entry name" value="Poty_coat"/>
</dbReference>
<dbReference type="Pfam" id="PF00767">
    <property type="entry name" value="Poty_coat"/>
    <property type="match status" value="1"/>
</dbReference>
<dbReference type="SUPFAM" id="SSF56672">
    <property type="entry name" value="DNA/RNA polymerases"/>
    <property type="match status" value="1"/>
</dbReference>
<organismHost>
    <name type="scientific">Capsicum annuum</name>
    <name type="common">Capsicum pepper</name>
    <dbReference type="NCBI Taxonomy" id="4072"/>
</organismHost>
<organismHost>
    <name type="scientific">Datura inoxia</name>
    <name type="common">Downy thornapple</name>
    <name type="synonym">Datura meteloides</name>
    <dbReference type="NCBI Taxonomy" id="4075"/>
</organismHost>
<organismHost>
    <name type="scientific">Solanum</name>
    <dbReference type="NCBI Taxonomy" id="4107"/>
</organismHost>
<sequence length="381" mass="43220">YVPKLEEERIVIYSTMDRADLAEHRLEAICAAMIESWGYSELTHQIRRFYSWLLQQQPFASIAQEGKAPYIASMALRKLYMDRAVDEEELRVFTEMMVALDDEFECDSYEVHHQANDTIDTGGNSKKDVKPEQGSIQPSSNKGKEKDVNAGTSGTHTVPRIKAITAKMRMPKSKGAAVLKLDHLLEYAPQQIDISNTRATQSQFDTWYEAVRVAYDIGETEMPTVMNGLMVWCIENGTSPNINGVWVMMDGSEQVEYPLKPIVENAKPTLRQIMAHFSDVAEAYIEMRNKKEPYMPRYGLVRNLRDASLARYAFDFYEVTSRTPVRAREAHIQMKAAALKSAQSRLFGLDGGVSTQEENTERHTTEDVSPSMHTLLGVKNM</sequence>
<name>POLG_PEMV</name>
<organism>
    <name type="scientific">Pepper mottle virus</name>
    <name type="common">PeMV</name>
    <dbReference type="NCBI Taxonomy" id="12209"/>
    <lineage>
        <taxon>Viruses</taxon>
        <taxon>Riboviria</taxon>
        <taxon>Orthornavirae</taxon>
        <taxon>Pisuviricota</taxon>
        <taxon>Stelpaviricetes</taxon>
        <taxon>Patatavirales</taxon>
        <taxon>Potyviridae</taxon>
        <taxon>Potyvirus</taxon>
        <taxon>Potyvirus capsimaculae</taxon>
    </lineage>
</organism>
<protein>
    <recommendedName>
        <fullName>Genome polyprotein</fullName>
    </recommendedName>
    <component>
        <recommendedName>
            <fullName>Nuclear inclusion protein B</fullName>
            <shortName>NI-B</shortName>
            <shortName>NIB</shortName>
        </recommendedName>
        <alternativeName>
            <fullName>RNA-directed RNA polymerase</fullName>
            <ecNumber>2.7.7.48</ecNumber>
        </alternativeName>
    </component>
    <component>
        <recommendedName>
            <fullName>Capsid protein</fullName>
            <shortName>CP</shortName>
        </recommendedName>
        <alternativeName>
            <fullName>Coat protein</fullName>
        </alternativeName>
    </component>
</protein>
<comment type="function">
    <molecule>Nuclear inclusion protein B</molecule>
    <text>An RNA-dependent RNA polymerase that plays an essential role in the virus replication.</text>
</comment>
<comment type="function">
    <molecule>Capsid protein</molecule>
    <text evidence="2">Involved in aphid transmission, cell-to-cell and systemis movement, encapsidation of the viral RNA and in the regulation of viral RNA amplification.</text>
</comment>
<comment type="catalytic activity">
    <reaction evidence="3">
        <text>RNA(n) + a ribonucleoside 5'-triphosphate = RNA(n+1) + diphosphate</text>
        <dbReference type="Rhea" id="RHEA:21248"/>
        <dbReference type="Rhea" id="RHEA-COMP:14527"/>
        <dbReference type="Rhea" id="RHEA-COMP:17342"/>
        <dbReference type="ChEBI" id="CHEBI:33019"/>
        <dbReference type="ChEBI" id="CHEBI:61557"/>
        <dbReference type="ChEBI" id="CHEBI:140395"/>
        <dbReference type="EC" id="2.7.7.48"/>
    </reaction>
</comment>
<comment type="subcellular location">
    <molecule>Capsid protein</molecule>
    <subcellularLocation>
        <location evidence="5">Virion</location>
    </subcellularLocation>
</comment>
<comment type="PTM">
    <text evidence="1">Genome polyprotein of potyviruses undergoes post-translational proteolytic processing by the main proteinase NIa-pro resulting in the production of at least ten individual proteins. The P1 proteinase and the HC-pro cleave only their respective C-termini autocatalytically. 6K1 is essential for proper proteolytic separation of P3 from CI (By similarity).</text>
</comment>
<comment type="similarity">
    <text evidence="5">Belongs to the potyviridae genome polyprotein family.</text>
</comment>
<comment type="sequence caution" evidence="5">
    <conflict type="frameshift">
        <sequence resource="EMBL-CDS" id="AAA46902"/>
    </conflict>
</comment>